<proteinExistence type="inferred from homology"/>
<dbReference type="EMBL" id="CP001616">
    <property type="protein sequence ID" value="ACQ94369.1"/>
    <property type="molecule type" value="Genomic_DNA"/>
</dbReference>
<dbReference type="RefSeq" id="WP_015879818.1">
    <property type="nucleotide sequence ID" value="NC_012691.1"/>
</dbReference>
<dbReference type="SMR" id="C4LBU5"/>
<dbReference type="STRING" id="595494.Tola_2776"/>
<dbReference type="KEGG" id="tau:Tola_2776"/>
<dbReference type="eggNOG" id="COG0049">
    <property type="taxonomic scope" value="Bacteria"/>
</dbReference>
<dbReference type="HOGENOM" id="CLU_072226_1_1_6"/>
<dbReference type="OrthoDB" id="9807653at2"/>
<dbReference type="Proteomes" id="UP000009073">
    <property type="component" value="Chromosome"/>
</dbReference>
<dbReference type="GO" id="GO:0015935">
    <property type="term" value="C:small ribosomal subunit"/>
    <property type="evidence" value="ECO:0007669"/>
    <property type="project" value="InterPro"/>
</dbReference>
<dbReference type="GO" id="GO:0019843">
    <property type="term" value="F:rRNA binding"/>
    <property type="evidence" value="ECO:0007669"/>
    <property type="project" value="UniProtKB-UniRule"/>
</dbReference>
<dbReference type="GO" id="GO:0003735">
    <property type="term" value="F:structural constituent of ribosome"/>
    <property type="evidence" value="ECO:0007669"/>
    <property type="project" value="InterPro"/>
</dbReference>
<dbReference type="GO" id="GO:0000049">
    <property type="term" value="F:tRNA binding"/>
    <property type="evidence" value="ECO:0007669"/>
    <property type="project" value="UniProtKB-UniRule"/>
</dbReference>
<dbReference type="GO" id="GO:0006412">
    <property type="term" value="P:translation"/>
    <property type="evidence" value="ECO:0007669"/>
    <property type="project" value="UniProtKB-UniRule"/>
</dbReference>
<dbReference type="CDD" id="cd14869">
    <property type="entry name" value="uS7_Bacteria"/>
    <property type="match status" value="1"/>
</dbReference>
<dbReference type="FunFam" id="1.10.455.10:FF:000001">
    <property type="entry name" value="30S ribosomal protein S7"/>
    <property type="match status" value="1"/>
</dbReference>
<dbReference type="Gene3D" id="1.10.455.10">
    <property type="entry name" value="Ribosomal protein S7 domain"/>
    <property type="match status" value="1"/>
</dbReference>
<dbReference type="HAMAP" id="MF_00480_B">
    <property type="entry name" value="Ribosomal_uS7_B"/>
    <property type="match status" value="1"/>
</dbReference>
<dbReference type="InterPro" id="IPR000235">
    <property type="entry name" value="Ribosomal_uS7"/>
</dbReference>
<dbReference type="InterPro" id="IPR005717">
    <property type="entry name" value="Ribosomal_uS7_bac/org-type"/>
</dbReference>
<dbReference type="InterPro" id="IPR020606">
    <property type="entry name" value="Ribosomal_uS7_CS"/>
</dbReference>
<dbReference type="InterPro" id="IPR023798">
    <property type="entry name" value="Ribosomal_uS7_dom"/>
</dbReference>
<dbReference type="InterPro" id="IPR036823">
    <property type="entry name" value="Ribosomal_uS7_dom_sf"/>
</dbReference>
<dbReference type="NCBIfam" id="TIGR01029">
    <property type="entry name" value="rpsG_bact"/>
    <property type="match status" value="1"/>
</dbReference>
<dbReference type="PANTHER" id="PTHR11205">
    <property type="entry name" value="RIBOSOMAL PROTEIN S7"/>
    <property type="match status" value="1"/>
</dbReference>
<dbReference type="Pfam" id="PF00177">
    <property type="entry name" value="Ribosomal_S7"/>
    <property type="match status" value="1"/>
</dbReference>
<dbReference type="PIRSF" id="PIRSF002122">
    <property type="entry name" value="RPS7p_RPS7a_RPS5e_RPS7o"/>
    <property type="match status" value="1"/>
</dbReference>
<dbReference type="SUPFAM" id="SSF47973">
    <property type="entry name" value="Ribosomal protein S7"/>
    <property type="match status" value="1"/>
</dbReference>
<dbReference type="PROSITE" id="PS00052">
    <property type="entry name" value="RIBOSOMAL_S7"/>
    <property type="match status" value="1"/>
</dbReference>
<accession>C4LBU5</accession>
<comment type="function">
    <text evidence="1">One of the primary rRNA binding proteins, it binds directly to 16S rRNA where it nucleates assembly of the head domain of the 30S subunit. Is located at the subunit interface close to the decoding center, probably blocks exit of the E-site tRNA.</text>
</comment>
<comment type="subunit">
    <text evidence="1">Part of the 30S ribosomal subunit. Contacts proteins S9 and S11.</text>
</comment>
<comment type="similarity">
    <text evidence="1">Belongs to the universal ribosomal protein uS7 family.</text>
</comment>
<protein>
    <recommendedName>
        <fullName evidence="1">Small ribosomal subunit protein uS7</fullName>
    </recommendedName>
    <alternativeName>
        <fullName evidence="2">30S ribosomal protein S7</fullName>
    </alternativeName>
</protein>
<sequence length="156" mass="17479">MPRRRVVGQRKILPDPKFGSELLAKFINVVMVDGKKSVSESIVYGALEIIANKSGKDHLATFEGALDNIRPNVEVKSRRVGGSTYQVPVEVRPVRRNALAMRWLVEAARKRGEKSMAQRLAGELLDAADNKGSAVKKREDVHRMAEANKAFAHYRW</sequence>
<gene>
    <name evidence="1" type="primary">rpsG</name>
    <name type="ordered locus">Tola_2776</name>
</gene>
<keyword id="KW-1185">Reference proteome</keyword>
<keyword id="KW-0687">Ribonucleoprotein</keyword>
<keyword id="KW-0689">Ribosomal protein</keyword>
<keyword id="KW-0694">RNA-binding</keyword>
<keyword id="KW-0699">rRNA-binding</keyword>
<keyword id="KW-0820">tRNA-binding</keyword>
<feature type="chain" id="PRO_1000206419" description="Small ribosomal subunit protein uS7">
    <location>
        <begin position="1"/>
        <end position="156"/>
    </location>
</feature>
<organism>
    <name type="scientific">Tolumonas auensis (strain DSM 9187 / NBRC 110442 / TA 4)</name>
    <dbReference type="NCBI Taxonomy" id="595494"/>
    <lineage>
        <taxon>Bacteria</taxon>
        <taxon>Pseudomonadati</taxon>
        <taxon>Pseudomonadota</taxon>
        <taxon>Gammaproteobacteria</taxon>
        <taxon>Aeromonadales</taxon>
        <taxon>Aeromonadaceae</taxon>
        <taxon>Tolumonas</taxon>
    </lineage>
</organism>
<reference key="1">
    <citation type="submission" date="2009-05" db="EMBL/GenBank/DDBJ databases">
        <title>Complete sequence of Tolumonas auensis DSM 9187.</title>
        <authorList>
            <consortium name="US DOE Joint Genome Institute"/>
            <person name="Lucas S."/>
            <person name="Copeland A."/>
            <person name="Lapidus A."/>
            <person name="Glavina del Rio T."/>
            <person name="Tice H."/>
            <person name="Bruce D."/>
            <person name="Goodwin L."/>
            <person name="Pitluck S."/>
            <person name="Chertkov O."/>
            <person name="Brettin T."/>
            <person name="Detter J.C."/>
            <person name="Han C."/>
            <person name="Larimer F."/>
            <person name="Land M."/>
            <person name="Hauser L."/>
            <person name="Kyrpides N."/>
            <person name="Mikhailova N."/>
            <person name="Spring S."/>
            <person name="Beller H."/>
        </authorList>
    </citation>
    <scope>NUCLEOTIDE SEQUENCE [LARGE SCALE GENOMIC DNA]</scope>
    <source>
        <strain>DSM 9187 / NBRC 110442 / TA 4</strain>
    </source>
</reference>
<name>RS7_TOLAT</name>
<evidence type="ECO:0000255" key="1">
    <source>
        <dbReference type="HAMAP-Rule" id="MF_00480"/>
    </source>
</evidence>
<evidence type="ECO:0000305" key="2"/>